<name>PT1_STAAM</name>
<comment type="function">
    <text evidence="1">General (non sugar-specific) component of the phosphoenolpyruvate-dependent sugar phosphotransferase system (sugar PTS). This major carbohydrate active-transport system catalyzes the phosphorylation of incoming sugar substrates concomitantly with their translocation across the cell membrane. Enzyme I transfers the phosphoryl group from phosphoenolpyruvate (PEP) to the phosphoryl carrier protein (HPr).</text>
</comment>
<comment type="catalytic activity">
    <reaction evidence="1">
        <text>L-histidyl-[protein] + phosphoenolpyruvate = N(pros)-phospho-L-histidyl-[protein] + pyruvate</text>
        <dbReference type="Rhea" id="RHEA:23880"/>
        <dbReference type="Rhea" id="RHEA-COMP:9745"/>
        <dbReference type="Rhea" id="RHEA-COMP:9746"/>
        <dbReference type="ChEBI" id="CHEBI:15361"/>
        <dbReference type="ChEBI" id="CHEBI:29979"/>
        <dbReference type="ChEBI" id="CHEBI:58702"/>
        <dbReference type="ChEBI" id="CHEBI:64837"/>
        <dbReference type="EC" id="2.7.3.9"/>
    </reaction>
</comment>
<comment type="cofactor">
    <cofactor evidence="1">
        <name>Mg(2+)</name>
        <dbReference type="ChEBI" id="CHEBI:18420"/>
    </cofactor>
</comment>
<comment type="subunit">
    <text evidence="1">Homodimer.</text>
</comment>
<comment type="subcellular location">
    <subcellularLocation>
        <location evidence="3">Cytoplasm</location>
    </subcellularLocation>
</comment>
<comment type="domain">
    <text evidence="1">The N-terminal domain contains the HPr binding site, the central domain the pyrophosphate/phosphate carrier histidine, and the C-terminal domain the pyruvate binding site.</text>
</comment>
<comment type="miscellaneous">
    <text evidence="1">The reaction takes place in three steps, mediated by a phosphocarrier histidine residue located on the surface of the central domain. The two first partial reactions are catalyzed at an active site located on the N-terminal domain, and the third partial reaction is catalyzed at an active site located on the C-terminal domain. For catalytic turnover, the central domain swivels from the concave surface of the N-terminal domain to that of the C-terminal domain.</text>
</comment>
<comment type="similarity">
    <text evidence="3">Belongs to the PEP-utilizing enzyme family.</text>
</comment>
<reference key="1">
    <citation type="journal article" date="2001" name="Lancet">
        <title>Whole genome sequencing of meticillin-resistant Staphylococcus aureus.</title>
        <authorList>
            <person name="Kuroda M."/>
            <person name="Ohta T."/>
            <person name="Uchiyama I."/>
            <person name="Baba T."/>
            <person name="Yuzawa H."/>
            <person name="Kobayashi I."/>
            <person name="Cui L."/>
            <person name="Oguchi A."/>
            <person name="Aoki K."/>
            <person name="Nagai Y."/>
            <person name="Lian J.-Q."/>
            <person name="Ito T."/>
            <person name="Kanamori M."/>
            <person name="Matsumaru H."/>
            <person name="Maruyama A."/>
            <person name="Murakami H."/>
            <person name="Hosoyama A."/>
            <person name="Mizutani-Ui Y."/>
            <person name="Takahashi N.K."/>
            <person name="Sawano T."/>
            <person name="Inoue R."/>
            <person name="Kaito C."/>
            <person name="Sekimizu K."/>
            <person name="Hirakawa H."/>
            <person name="Kuhara S."/>
            <person name="Goto S."/>
            <person name="Yabuzaki J."/>
            <person name="Kanehisa M."/>
            <person name="Yamashita A."/>
            <person name="Oshima K."/>
            <person name="Furuya K."/>
            <person name="Yoshino C."/>
            <person name="Shiba T."/>
            <person name="Hattori M."/>
            <person name="Ogasawara N."/>
            <person name="Hayashi H."/>
            <person name="Hiramatsu K."/>
        </authorList>
    </citation>
    <scope>NUCLEOTIDE SEQUENCE [LARGE SCALE GENOMIC DNA]</scope>
    <source>
        <strain>Mu50 / ATCC 700699</strain>
    </source>
</reference>
<proteinExistence type="inferred from homology"/>
<gene>
    <name type="primary">ptsI</name>
    <name type="ordered locus">SAV1084</name>
</gene>
<feature type="chain" id="PRO_0000147081" description="Phosphoenolpyruvate-protein phosphotransferase">
    <location>
        <begin position="1"/>
        <end position="572"/>
    </location>
</feature>
<feature type="active site" description="Tele-phosphohistidine intermediate" evidence="1">
    <location>
        <position position="191"/>
    </location>
</feature>
<feature type="active site" description="Proton donor" evidence="1">
    <location>
        <position position="504"/>
    </location>
</feature>
<feature type="binding site" evidence="2">
    <location>
        <position position="298"/>
    </location>
    <ligand>
        <name>phosphoenolpyruvate</name>
        <dbReference type="ChEBI" id="CHEBI:58702"/>
    </ligand>
</feature>
<feature type="binding site" evidence="1">
    <location>
        <position position="334"/>
    </location>
    <ligand>
        <name>phosphoenolpyruvate</name>
        <dbReference type="ChEBI" id="CHEBI:58702"/>
    </ligand>
</feature>
<feature type="binding site" evidence="1">
    <location>
        <position position="433"/>
    </location>
    <ligand>
        <name>Mg(2+)</name>
        <dbReference type="ChEBI" id="CHEBI:18420"/>
    </ligand>
</feature>
<feature type="binding site" evidence="1">
    <location>
        <begin position="456"/>
        <end position="457"/>
    </location>
    <ligand>
        <name>phosphoenolpyruvate</name>
        <dbReference type="ChEBI" id="CHEBI:58702"/>
    </ligand>
</feature>
<feature type="binding site" evidence="1">
    <location>
        <position position="457"/>
    </location>
    <ligand>
        <name>Mg(2+)</name>
        <dbReference type="ChEBI" id="CHEBI:18420"/>
    </ligand>
</feature>
<feature type="binding site" evidence="2">
    <location>
        <position position="467"/>
    </location>
    <ligand>
        <name>phosphoenolpyruvate</name>
        <dbReference type="ChEBI" id="CHEBI:58702"/>
    </ligand>
</feature>
<keyword id="KW-0963">Cytoplasm</keyword>
<keyword id="KW-0418">Kinase</keyword>
<keyword id="KW-0460">Magnesium</keyword>
<keyword id="KW-0479">Metal-binding</keyword>
<keyword id="KW-0598">Phosphotransferase system</keyword>
<keyword id="KW-0762">Sugar transport</keyword>
<keyword id="KW-0808">Transferase</keyword>
<keyword id="KW-0813">Transport</keyword>
<protein>
    <recommendedName>
        <fullName evidence="1">Phosphoenolpyruvate-protein phosphotransferase</fullName>
        <ecNumber evidence="1">2.7.3.9</ecNumber>
    </recommendedName>
    <alternativeName>
        <fullName evidence="1">Phosphotransferase system, enzyme I</fullName>
    </alternativeName>
</protein>
<organism>
    <name type="scientific">Staphylococcus aureus (strain Mu50 / ATCC 700699)</name>
    <dbReference type="NCBI Taxonomy" id="158878"/>
    <lineage>
        <taxon>Bacteria</taxon>
        <taxon>Bacillati</taxon>
        <taxon>Bacillota</taxon>
        <taxon>Bacilli</taxon>
        <taxon>Bacillales</taxon>
        <taxon>Staphylococcaceae</taxon>
        <taxon>Staphylococcus</taxon>
    </lineage>
</organism>
<sequence length="572" mass="63206">MSKLIKGIAASDGVAIAKAYLLVEPDLTFDKNEKVTDVEGEVAKFNSAIEASKVELTKIRNNAEVQLGADKAAIFDAHLLVLDDPELIQPIQDKIKNENANAATALTDVTTQFVTIFESMDNEYMKERAADIRDVSKRVLSHILGVELPNPSMIDESVVIVGNDLTPSDTAQLNKEFVQGFATNIGGRTSHSAIMSRSLEIPAIVGTKSITQEVKQGDIIIVDGLNGDVIVNPTEDELIAYQDKRECYFADKKELQKLRDADTVTVDGVHAELAANIGTPNDLPGVIENGAQGIGLYRTEFLYMGRDQMPTEEEQFEAYKEVLEAMDGKRVVVRTLDIGGDKELSYLNLPEEMNPFLGYRAIRLCLAQQDIFRPQLRALLRASVYGKLNIMFPMVATINEFREAKAILLEEKENLKNEGHDISDDIELGIMVEIPATAALADVFAKEVDFFSIGTNDLIQYTLAADRMSERVSYLYQPYNPSILRLVKQVIEASHKEGKWTGMCGEMAGDETAIPLLLGLGLDEFSMSATSILKARRQINGLSKNEMTELANRAVDCATQEEVIELVNNYVK</sequence>
<evidence type="ECO:0000250" key="1">
    <source>
        <dbReference type="UniProtKB" id="P08839"/>
    </source>
</evidence>
<evidence type="ECO:0000250" key="2">
    <source>
        <dbReference type="UniProtKB" id="P23533"/>
    </source>
</evidence>
<evidence type="ECO:0000305" key="3"/>
<accession>Q931U2</accession>
<dbReference type="EC" id="2.7.3.9" evidence="1"/>
<dbReference type="EMBL" id="BA000017">
    <property type="protein sequence ID" value="BAB57246.1"/>
    <property type="molecule type" value="Genomic_DNA"/>
</dbReference>
<dbReference type="RefSeq" id="WP_000040049.1">
    <property type="nucleotide sequence ID" value="NC_002758.2"/>
</dbReference>
<dbReference type="SMR" id="Q931U2"/>
<dbReference type="KEGG" id="sav:SAV1084"/>
<dbReference type="HOGENOM" id="CLU_007308_7_0_9"/>
<dbReference type="PhylomeDB" id="Q931U2"/>
<dbReference type="Proteomes" id="UP000002481">
    <property type="component" value="Chromosome"/>
</dbReference>
<dbReference type="GO" id="GO:0005737">
    <property type="term" value="C:cytoplasm"/>
    <property type="evidence" value="ECO:0007669"/>
    <property type="project" value="UniProtKB-SubCell"/>
</dbReference>
<dbReference type="GO" id="GO:0016301">
    <property type="term" value="F:kinase activity"/>
    <property type="evidence" value="ECO:0007669"/>
    <property type="project" value="UniProtKB-KW"/>
</dbReference>
<dbReference type="GO" id="GO:0046872">
    <property type="term" value="F:metal ion binding"/>
    <property type="evidence" value="ECO:0007669"/>
    <property type="project" value="UniProtKB-KW"/>
</dbReference>
<dbReference type="GO" id="GO:0008965">
    <property type="term" value="F:phosphoenolpyruvate-protein phosphotransferase activity"/>
    <property type="evidence" value="ECO:0007669"/>
    <property type="project" value="UniProtKB-EC"/>
</dbReference>
<dbReference type="GO" id="GO:0009401">
    <property type="term" value="P:phosphoenolpyruvate-dependent sugar phosphotransferase system"/>
    <property type="evidence" value="ECO:0007669"/>
    <property type="project" value="UniProtKB-KW"/>
</dbReference>
<dbReference type="FunFam" id="1.10.274.10:FF:000001">
    <property type="entry name" value="Phosphoenolpyruvate-protein phosphotransferase"/>
    <property type="match status" value="1"/>
</dbReference>
<dbReference type="FunFam" id="3.20.20.60:FF:000007">
    <property type="entry name" value="Phosphoenolpyruvate-protein phosphotransferase"/>
    <property type="match status" value="1"/>
</dbReference>
<dbReference type="Gene3D" id="3.20.20.60">
    <property type="entry name" value="Phosphoenolpyruvate-binding domains"/>
    <property type="match status" value="1"/>
</dbReference>
<dbReference type="Gene3D" id="3.50.30.10">
    <property type="entry name" value="Phosphohistidine domain"/>
    <property type="match status" value="1"/>
</dbReference>
<dbReference type="Gene3D" id="1.10.274.10">
    <property type="entry name" value="PtsI, HPr-binding domain"/>
    <property type="match status" value="1"/>
</dbReference>
<dbReference type="InterPro" id="IPR008279">
    <property type="entry name" value="PEP-util_enz_mobile_dom"/>
</dbReference>
<dbReference type="InterPro" id="IPR050499">
    <property type="entry name" value="PEP-utilizing_PTS_enzyme"/>
</dbReference>
<dbReference type="InterPro" id="IPR018274">
    <property type="entry name" value="PEP_util_AS"/>
</dbReference>
<dbReference type="InterPro" id="IPR000121">
    <property type="entry name" value="PEP_util_C"/>
</dbReference>
<dbReference type="InterPro" id="IPR023151">
    <property type="entry name" value="PEP_util_CS"/>
</dbReference>
<dbReference type="InterPro" id="IPR036637">
    <property type="entry name" value="Phosphohistidine_dom_sf"/>
</dbReference>
<dbReference type="InterPro" id="IPR024692">
    <property type="entry name" value="PTS_EI"/>
</dbReference>
<dbReference type="InterPro" id="IPR006318">
    <property type="entry name" value="PTS_EI-like"/>
</dbReference>
<dbReference type="InterPro" id="IPR008731">
    <property type="entry name" value="PTS_EIN"/>
</dbReference>
<dbReference type="InterPro" id="IPR036618">
    <property type="entry name" value="PtsI_HPr-bd_sf"/>
</dbReference>
<dbReference type="InterPro" id="IPR015813">
    <property type="entry name" value="Pyrv/PenolPyrv_kinase-like_dom"/>
</dbReference>
<dbReference type="InterPro" id="IPR040442">
    <property type="entry name" value="Pyrv_kinase-like_dom_sf"/>
</dbReference>
<dbReference type="NCBIfam" id="TIGR01417">
    <property type="entry name" value="PTS_I_fam"/>
    <property type="match status" value="1"/>
</dbReference>
<dbReference type="PANTHER" id="PTHR46244">
    <property type="entry name" value="PHOSPHOENOLPYRUVATE-PROTEIN PHOSPHOTRANSFERASE"/>
    <property type="match status" value="1"/>
</dbReference>
<dbReference type="PANTHER" id="PTHR46244:SF3">
    <property type="entry name" value="PHOSPHOENOLPYRUVATE-PROTEIN PHOSPHOTRANSFERASE"/>
    <property type="match status" value="1"/>
</dbReference>
<dbReference type="Pfam" id="PF05524">
    <property type="entry name" value="PEP-utilisers_N"/>
    <property type="match status" value="1"/>
</dbReference>
<dbReference type="Pfam" id="PF00391">
    <property type="entry name" value="PEP-utilizers"/>
    <property type="match status" value="1"/>
</dbReference>
<dbReference type="Pfam" id="PF02896">
    <property type="entry name" value="PEP-utilizers_C"/>
    <property type="match status" value="1"/>
</dbReference>
<dbReference type="PIRSF" id="PIRSF000732">
    <property type="entry name" value="PTS_enzyme_I"/>
    <property type="match status" value="1"/>
</dbReference>
<dbReference type="PRINTS" id="PR01736">
    <property type="entry name" value="PHPHTRNFRASE"/>
</dbReference>
<dbReference type="SUPFAM" id="SSF47831">
    <property type="entry name" value="Enzyme I of the PEP:sugar phosphotransferase system HPr-binding (sub)domain"/>
    <property type="match status" value="1"/>
</dbReference>
<dbReference type="SUPFAM" id="SSF51621">
    <property type="entry name" value="Phosphoenolpyruvate/pyruvate domain"/>
    <property type="match status" value="1"/>
</dbReference>
<dbReference type="SUPFAM" id="SSF52009">
    <property type="entry name" value="Phosphohistidine domain"/>
    <property type="match status" value="1"/>
</dbReference>
<dbReference type="PROSITE" id="PS00742">
    <property type="entry name" value="PEP_ENZYMES_2"/>
    <property type="match status" value="1"/>
</dbReference>
<dbReference type="PROSITE" id="PS00370">
    <property type="entry name" value="PEP_ENZYMES_PHOS_SITE"/>
    <property type="match status" value="1"/>
</dbReference>